<evidence type="ECO:0000305" key="1"/>
<reference key="1">
    <citation type="journal article" date="2000" name="J. Mol. Evol.">
        <title>The structure and gene repertoire of an ancient red algal plastid genome.</title>
        <authorList>
            <person name="Gloeckner G."/>
            <person name="Rosenthal A."/>
            <person name="Valentin K.-U."/>
        </authorList>
    </citation>
    <scope>NUCLEOTIDE SEQUENCE [LARGE SCALE GENOMIC DNA]</scope>
    <source>
        <strain>RK-1</strain>
    </source>
</reference>
<accession>O19904</accession>
<name>YCF23_CYACA</name>
<feature type="chain" id="PRO_0000217337" description="Uncharacterized protein ycf23">
    <location>
        <begin position="1"/>
        <end position="249"/>
    </location>
</feature>
<keyword id="KW-0150">Chloroplast</keyword>
<keyword id="KW-0934">Plastid</keyword>
<protein>
    <recommendedName>
        <fullName>Uncharacterized protein ycf23</fullName>
    </recommendedName>
</protein>
<proteinExistence type="inferred from homology"/>
<dbReference type="EMBL" id="AF022186">
    <property type="protein sequence ID" value="AAB82685.1"/>
    <property type="molecule type" value="Genomic_DNA"/>
</dbReference>
<dbReference type="PIR" id="T11972">
    <property type="entry name" value="T11972"/>
</dbReference>
<dbReference type="RefSeq" id="NP_045076.1">
    <property type="nucleotide sequence ID" value="NC_001840.1"/>
</dbReference>
<dbReference type="GeneID" id="800279"/>
<dbReference type="GO" id="GO:0009507">
    <property type="term" value="C:chloroplast"/>
    <property type="evidence" value="ECO:0007669"/>
    <property type="project" value="UniProtKB-SubCell"/>
</dbReference>
<dbReference type="Gene3D" id="3.20.20.70">
    <property type="entry name" value="Aldolase class I"/>
    <property type="match status" value="1"/>
</dbReference>
<dbReference type="InterPro" id="IPR013785">
    <property type="entry name" value="Aldolase_TIM"/>
</dbReference>
<dbReference type="InterPro" id="IPR007570">
    <property type="entry name" value="Uncharacterised_Ycf23"/>
</dbReference>
<dbReference type="PANTHER" id="PTHR36895">
    <property type="match status" value="1"/>
</dbReference>
<dbReference type="PANTHER" id="PTHR36895:SF1">
    <property type="entry name" value="YCF23 PROTEIN"/>
    <property type="match status" value="1"/>
</dbReference>
<dbReference type="Pfam" id="PF04481">
    <property type="entry name" value="DUF561"/>
    <property type="match status" value="1"/>
</dbReference>
<dbReference type="SUPFAM" id="SSF51569">
    <property type="entry name" value="Aldolase"/>
    <property type="match status" value="1"/>
</dbReference>
<comment type="subcellular location">
    <subcellularLocation>
        <location>Plastid</location>
        <location>Chloroplast</location>
    </subcellularLocation>
</comment>
<comment type="similarity">
    <text evidence="1">Belongs to the ycf23 family.</text>
</comment>
<gene>
    <name type="primary">ycf23</name>
    <name type="synonym">ycf12</name>
</gene>
<geneLocation type="chloroplast"/>
<sequence length="249" mass="27387">MVNKSQVLLDIANKKAIKVISGLTNLNYEHVLTIARASQRACVSYIDIAADPQLVKVVKANVNIPICVSGLEIQPIYNAVLAGADLIEVGNYESLYKRNTVLSVCKIITLVEEIKKLCPRVPLTVTIPYILNQKDQINLCKQLESLRVDYIQTEGNSISKCKNHCVQDLLRLSLQTLACTYELVKHTQLPIICSSGLSDVTVPLAFSLGASGIGIGKFVTSYYEEEKIVSILSKIKKIVSGTRSYQACE</sequence>
<organism>
    <name type="scientific">Cyanidium caldarium</name>
    <name type="common">Red alga</name>
    <dbReference type="NCBI Taxonomy" id="2771"/>
    <lineage>
        <taxon>Eukaryota</taxon>
        <taxon>Rhodophyta</taxon>
        <taxon>Bangiophyceae</taxon>
        <taxon>Cyanidiales</taxon>
        <taxon>Cyanidiaceae</taxon>
        <taxon>Cyanidium</taxon>
    </lineage>
</organism>